<comment type="function">
    <text evidence="1">Serine protease inhibitor.</text>
</comment>
<comment type="subcellular location">
    <subcellularLocation>
        <location evidence="1">Secreted</location>
    </subcellularLocation>
</comment>
<comment type="tissue specificity">
    <text>Expressed by the venom gland.</text>
</comment>
<comment type="similarity">
    <text evidence="4">Belongs to the venom Kunitz-type family.</text>
</comment>
<dbReference type="EMBL" id="AY626933">
    <property type="protein sequence ID" value="AAT45409.1"/>
    <property type="molecule type" value="mRNA"/>
</dbReference>
<dbReference type="SMR" id="Q6ITB2"/>
<dbReference type="MEROPS" id="I02.052"/>
<dbReference type="GO" id="GO:0005615">
    <property type="term" value="C:extracellular space"/>
    <property type="evidence" value="ECO:0007669"/>
    <property type="project" value="TreeGrafter"/>
</dbReference>
<dbReference type="GO" id="GO:0004867">
    <property type="term" value="F:serine-type endopeptidase inhibitor activity"/>
    <property type="evidence" value="ECO:0007669"/>
    <property type="project" value="UniProtKB-KW"/>
</dbReference>
<dbReference type="CDD" id="cd22594">
    <property type="entry name" value="Kunitz_textilinin-like"/>
    <property type="match status" value="1"/>
</dbReference>
<dbReference type="FunFam" id="4.10.410.10:FF:000004">
    <property type="entry name" value="Tissue factor pathway inhibitor"/>
    <property type="match status" value="1"/>
</dbReference>
<dbReference type="Gene3D" id="4.10.410.10">
    <property type="entry name" value="Pancreatic trypsin inhibitor Kunitz domain"/>
    <property type="match status" value="1"/>
</dbReference>
<dbReference type="InterPro" id="IPR002223">
    <property type="entry name" value="Kunitz_BPTI"/>
</dbReference>
<dbReference type="InterPro" id="IPR036880">
    <property type="entry name" value="Kunitz_BPTI_sf"/>
</dbReference>
<dbReference type="InterPro" id="IPR020901">
    <property type="entry name" value="Prtase_inh_Kunz-CS"/>
</dbReference>
<dbReference type="InterPro" id="IPR050098">
    <property type="entry name" value="TFPI/VKTCI-like"/>
</dbReference>
<dbReference type="PANTHER" id="PTHR10083">
    <property type="entry name" value="KUNITZ-TYPE PROTEASE INHIBITOR-RELATED"/>
    <property type="match status" value="1"/>
</dbReference>
<dbReference type="PANTHER" id="PTHR10083:SF376">
    <property type="entry name" value="SERINE PEPTIDASE INHIBITOR, KUNITZ TYPE, 3"/>
    <property type="match status" value="1"/>
</dbReference>
<dbReference type="Pfam" id="PF00014">
    <property type="entry name" value="Kunitz_BPTI"/>
    <property type="match status" value="1"/>
</dbReference>
<dbReference type="PRINTS" id="PR00759">
    <property type="entry name" value="BASICPTASE"/>
</dbReference>
<dbReference type="SMART" id="SM00131">
    <property type="entry name" value="KU"/>
    <property type="match status" value="1"/>
</dbReference>
<dbReference type="SUPFAM" id="SSF57362">
    <property type="entry name" value="BPTI-like"/>
    <property type="match status" value="1"/>
</dbReference>
<dbReference type="PROSITE" id="PS00280">
    <property type="entry name" value="BPTI_KUNITZ_1"/>
    <property type="match status" value="1"/>
</dbReference>
<dbReference type="PROSITE" id="PS50279">
    <property type="entry name" value="BPTI_KUNITZ_2"/>
    <property type="match status" value="1"/>
</dbReference>
<evidence type="ECO:0000250" key="1"/>
<evidence type="ECO:0000255" key="2"/>
<evidence type="ECO:0000255" key="3">
    <source>
        <dbReference type="PROSITE-ProRule" id="PRU00031"/>
    </source>
</evidence>
<evidence type="ECO:0000305" key="4"/>
<proteinExistence type="evidence at transcript level"/>
<keyword id="KW-1015">Disulfide bond</keyword>
<keyword id="KW-0646">Protease inhibitor</keyword>
<keyword id="KW-0964">Secreted</keyword>
<keyword id="KW-0722">Serine protease inhibitor</keyword>
<keyword id="KW-0732">Signal</keyword>
<protein>
    <recommendedName>
        <fullName>Kunitz-type serine protease inhibitor tigerin-2</fullName>
    </recommendedName>
</protein>
<organism>
    <name type="scientific">Notechis scutatus scutatus</name>
    <name type="common">Mainland tiger snake</name>
    <name type="synonym">Common tiger snake</name>
    <dbReference type="NCBI Taxonomy" id="70142"/>
    <lineage>
        <taxon>Eukaryota</taxon>
        <taxon>Metazoa</taxon>
        <taxon>Chordata</taxon>
        <taxon>Craniata</taxon>
        <taxon>Vertebrata</taxon>
        <taxon>Euteleostomi</taxon>
        <taxon>Lepidosauria</taxon>
        <taxon>Squamata</taxon>
        <taxon>Bifurcata</taxon>
        <taxon>Unidentata</taxon>
        <taxon>Episquamata</taxon>
        <taxon>Toxicofera</taxon>
        <taxon>Serpentes</taxon>
        <taxon>Colubroidea</taxon>
        <taxon>Elapidae</taxon>
        <taxon>Hydrophiinae</taxon>
        <taxon>Notechis</taxon>
    </lineage>
</organism>
<name>VKT2_NOTSC</name>
<reference key="1">
    <citation type="submission" date="2004-05" db="EMBL/GenBank/DDBJ databases">
        <title>Australian tiger snake venom gland cDNA encoding tigerin-2.</title>
        <authorList>
            <person name="Filippovich I."/>
            <person name="Sorokina N.I."/>
        </authorList>
    </citation>
    <scope>NUCLEOTIDE SEQUENCE [MRNA]</scope>
    <source>
        <tissue>Venom gland</tissue>
    </source>
</reference>
<sequence length="83" mass="9073">MSSGGLLLLLGLLTLWAELTPVSSKDHPEFCELPADSGPCRGILHAFYYHPVHRTCLEFIYGGCYGNANNFKTIDECEPPCAA</sequence>
<accession>Q6ITB2</accession>
<feature type="signal peptide" evidence="2">
    <location>
        <begin position="1"/>
        <end position="24"/>
    </location>
</feature>
<feature type="chain" id="PRO_0000376889" description="Kunitz-type serine protease inhibitor tigerin-2">
    <location>
        <begin position="25"/>
        <end position="83"/>
    </location>
</feature>
<feature type="domain" description="BPTI/Kunitz inhibitor" evidence="3">
    <location>
        <begin position="31"/>
        <end position="81"/>
    </location>
</feature>
<feature type="site" description="Reactive bond for trypsin" evidence="1">
    <location>
        <begin position="41"/>
        <end position="42"/>
    </location>
</feature>
<feature type="disulfide bond" evidence="3">
    <location>
        <begin position="31"/>
        <end position="81"/>
    </location>
</feature>
<feature type="disulfide bond" evidence="3">
    <location>
        <begin position="40"/>
        <end position="64"/>
    </location>
</feature>
<feature type="disulfide bond" evidence="3">
    <location>
        <begin position="56"/>
        <end position="77"/>
    </location>
</feature>